<name>APAG_ECO27</name>
<proteinExistence type="inferred from homology"/>
<gene>
    <name evidence="1" type="primary">apaG</name>
    <name type="ordered locus">E2348C_0053</name>
</gene>
<feature type="chain" id="PRO_1000148496" description="Protein ApaG">
    <location>
        <begin position="1"/>
        <end position="125"/>
    </location>
</feature>
<feature type="domain" description="ApaG" evidence="1">
    <location>
        <begin position="1"/>
        <end position="125"/>
    </location>
</feature>
<protein>
    <recommendedName>
        <fullName evidence="1">Protein ApaG</fullName>
    </recommendedName>
</protein>
<organism>
    <name type="scientific">Escherichia coli O127:H6 (strain E2348/69 / EPEC)</name>
    <dbReference type="NCBI Taxonomy" id="574521"/>
    <lineage>
        <taxon>Bacteria</taxon>
        <taxon>Pseudomonadati</taxon>
        <taxon>Pseudomonadota</taxon>
        <taxon>Gammaproteobacteria</taxon>
        <taxon>Enterobacterales</taxon>
        <taxon>Enterobacteriaceae</taxon>
        <taxon>Escherichia</taxon>
    </lineage>
</organism>
<reference key="1">
    <citation type="journal article" date="2009" name="J. Bacteriol.">
        <title>Complete genome sequence and comparative genome analysis of enteropathogenic Escherichia coli O127:H6 strain E2348/69.</title>
        <authorList>
            <person name="Iguchi A."/>
            <person name="Thomson N.R."/>
            <person name="Ogura Y."/>
            <person name="Saunders D."/>
            <person name="Ooka T."/>
            <person name="Henderson I.R."/>
            <person name="Harris D."/>
            <person name="Asadulghani M."/>
            <person name="Kurokawa K."/>
            <person name="Dean P."/>
            <person name="Kenny B."/>
            <person name="Quail M.A."/>
            <person name="Thurston S."/>
            <person name="Dougan G."/>
            <person name="Hayashi T."/>
            <person name="Parkhill J."/>
            <person name="Frankel G."/>
        </authorList>
    </citation>
    <scope>NUCLEOTIDE SEQUENCE [LARGE SCALE GENOMIC DNA]</scope>
    <source>
        <strain>E2348/69 / EPEC</strain>
    </source>
</reference>
<dbReference type="EMBL" id="FM180568">
    <property type="protein sequence ID" value="CAS07601.1"/>
    <property type="molecule type" value="Genomic_DNA"/>
</dbReference>
<dbReference type="RefSeq" id="WP_000610901.1">
    <property type="nucleotide sequence ID" value="NC_011601.1"/>
</dbReference>
<dbReference type="SMR" id="B7UI98"/>
<dbReference type="GeneID" id="93777385"/>
<dbReference type="KEGG" id="ecg:E2348C_0053"/>
<dbReference type="HOGENOM" id="CLU_128074_0_0_6"/>
<dbReference type="Proteomes" id="UP000008205">
    <property type="component" value="Chromosome"/>
</dbReference>
<dbReference type="GO" id="GO:0070987">
    <property type="term" value="P:error-free translesion synthesis"/>
    <property type="evidence" value="ECO:0007669"/>
    <property type="project" value="TreeGrafter"/>
</dbReference>
<dbReference type="Gene3D" id="2.60.40.1470">
    <property type="entry name" value="ApaG domain"/>
    <property type="match status" value="1"/>
</dbReference>
<dbReference type="HAMAP" id="MF_00791">
    <property type="entry name" value="ApaG"/>
    <property type="match status" value="1"/>
</dbReference>
<dbReference type="InterPro" id="IPR007474">
    <property type="entry name" value="ApaG_domain"/>
</dbReference>
<dbReference type="InterPro" id="IPR036767">
    <property type="entry name" value="ApaG_sf"/>
</dbReference>
<dbReference type="InterPro" id="IPR023065">
    <property type="entry name" value="Uncharacterised_ApaG"/>
</dbReference>
<dbReference type="NCBIfam" id="NF003967">
    <property type="entry name" value="PRK05461.1"/>
    <property type="match status" value="1"/>
</dbReference>
<dbReference type="PANTHER" id="PTHR14289">
    <property type="entry name" value="F-BOX ONLY PROTEIN 3"/>
    <property type="match status" value="1"/>
</dbReference>
<dbReference type="PANTHER" id="PTHR14289:SF16">
    <property type="entry name" value="POLYMERASE DELTA-INTERACTING PROTEIN 2"/>
    <property type="match status" value="1"/>
</dbReference>
<dbReference type="Pfam" id="PF04379">
    <property type="entry name" value="DUF525"/>
    <property type="match status" value="1"/>
</dbReference>
<dbReference type="SUPFAM" id="SSF110069">
    <property type="entry name" value="ApaG-like"/>
    <property type="match status" value="1"/>
</dbReference>
<dbReference type="PROSITE" id="PS51087">
    <property type="entry name" value="APAG"/>
    <property type="match status" value="1"/>
</dbReference>
<evidence type="ECO:0000255" key="1">
    <source>
        <dbReference type="HAMAP-Rule" id="MF_00791"/>
    </source>
</evidence>
<accession>B7UI98</accession>
<sequence length="125" mass="13867">MINSPRVCIQVQSVYIEAQSSPDNERYVFAYTVTIRNLGRAPVQLLGRYWLITNGNGRETEVQGEGVVGVQPLIAPGEEYQYTSGAIIETPLGTMQGHYEMIDENGVPFSIDIPVFRLAVPTLIH</sequence>
<keyword id="KW-1185">Reference proteome</keyword>